<protein>
    <recommendedName>
        <fullName evidence="1">Cytidylate kinase</fullName>
        <shortName evidence="1">CK</shortName>
        <ecNumber evidence="1">2.7.4.25</ecNumber>
    </recommendedName>
    <alternativeName>
        <fullName evidence="1">Cytidine monophosphate kinase</fullName>
        <shortName evidence="1">CMP kinase</shortName>
    </alternativeName>
</protein>
<sequence length="219" mass="24595">MKAINIALDGPAAAGKSTIAKRVASELSMIYVDTGAMYRALTYKYLKLNKTEDFAKLVDQTTLDLTYKADKGQCVILDNEDVTDFLRNNDVTQHVSYVASKEPVRSFAVKKQKELAAEKGIVMDGRDIGTVVLPDADLKVYMIASVEERAERRYKDNQLRGIESNFEDLKRDIEARDQYDMNREISPLRKADDAVTLDTTGKSIEEVTDEILAMVSQIK</sequence>
<keyword id="KW-0067">ATP-binding</keyword>
<keyword id="KW-0963">Cytoplasm</keyword>
<keyword id="KW-0418">Kinase</keyword>
<keyword id="KW-0547">Nucleotide-binding</keyword>
<keyword id="KW-0808">Transferase</keyword>
<evidence type="ECO:0000255" key="1">
    <source>
        <dbReference type="HAMAP-Rule" id="MF_00238"/>
    </source>
</evidence>
<gene>
    <name evidence="1" type="primary">cmk</name>
    <name type="ordered locus">SA1309</name>
</gene>
<feature type="chain" id="PRO_0000131974" description="Cytidylate kinase">
    <location>
        <begin position="1"/>
        <end position="219"/>
    </location>
</feature>
<feature type="binding site" evidence="1">
    <location>
        <begin position="10"/>
        <end position="18"/>
    </location>
    <ligand>
        <name>ATP</name>
        <dbReference type="ChEBI" id="CHEBI:30616"/>
    </ligand>
</feature>
<organism>
    <name type="scientific">Staphylococcus aureus (strain N315)</name>
    <dbReference type="NCBI Taxonomy" id="158879"/>
    <lineage>
        <taxon>Bacteria</taxon>
        <taxon>Bacillati</taxon>
        <taxon>Bacillota</taxon>
        <taxon>Bacilli</taxon>
        <taxon>Bacillales</taxon>
        <taxon>Staphylococcaceae</taxon>
        <taxon>Staphylococcus</taxon>
    </lineage>
</organism>
<proteinExistence type="inferred from homology"/>
<dbReference type="EC" id="2.7.4.25" evidence="1"/>
<dbReference type="EMBL" id="BA000018">
    <property type="protein sequence ID" value="BAB42571.1"/>
    <property type="molecule type" value="Genomic_DNA"/>
</dbReference>
<dbReference type="PIR" id="F89926">
    <property type="entry name" value="F89926"/>
</dbReference>
<dbReference type="RefSeq" id="WP_000644391.1">
    <property type="nucleotide sequence ID" value="NC_002745.2"/>
</dbReference>
<dbReference type="SMR" id="P63806"/>
<dbReference type="EnsemblBacteria" id="BAB42571">
    <property type="protein sequence ID" value="BAB42571"/>
    <property type="gene ID" value="BAB42571"/>
</dbReference>
<dbReference type="KEGG" id="sau:SA1309"/>
<dbReference type="HOGENOM" id="CLU_079959_0_2_9"/>
<dbReference type="GO" id="GO:0005829">
    <property type="term" value="C:cytosol"/>
    <property type="evidence" value="ECO:0007669"/>
    <property type="project" value="TreeGrafter"/>
</dbReference>
<dbReference type="GO" id="GO:0005524">
    <property type="term" value="F:ATP binding"/>
    <property type="evidence" value="ECO:0007669"/>
    <property type="project" value="UniProtKB-UniRule"/>
</dbReference>
<dbReference type="GO" id="GO:0036430">
    <property type="term" value="F:CMP kinase activity"/>
    <property type="evidence" value="ECO:0007669"/>
    <property type="project" value="RHEA"/>
</dbReference>
<dbReference type="GO" id="GO:0036431">
    <property type="term" value="F:dCMP kinase activity"/>
    <property type="evidence" value="ECO:0007669"/>
    <property type="project" value="RHEA"/>
</dbReference>
<dbReference type="GO" id="GO:0015949">
    <property type="term" value="P:nucleobase-containing small molecule interconversion"/>
    <property type="evidence" value="ECO:0007669"/>
    <property type="project" value="TreeGrafter"/>
</dbReference>
<dbReference type="GO" id="GO:0006220">
    <property type="term" value="P:pyrimidine nucleotide metabolic process"/>
    <property type="evidence" value="ECO:0007669"/>
    <property type="project" value="UniProtKB-UniRule"/>
</dbReference>
<dbReference type="CDD" id="cd02020">
    <property type="entry name" value="CMPK"/>
    <property type="match status" value="1"/>
</dbReference>
<dbReference type="Gene3D" id="3.40.50.300">
    <property type="entry name" value="P-loop containing nucleotide triphosphate hydrolases"/>
    <property type="match status" value="1"/>
</dbReference>
<dbReference type="HAMAP" id="MF_00238">
    <property type="entry name" value="Cytidyl_kinase_type1"/>
    <property type="match status" value="1"/>
</dbReference>
<dbReference type="InterPro" id="IPR003136">
    <property type="entry name" value="Cytidylate_kin"/>
</dbReference>
<dbReference type="InterPro" id="IPR011994">
    <property type="entry name" value="Cytidylate_kinase_dom"/>
</dbReference>
<dbReference type="InterPro" id="IPR027417">
    <property type="entry name" value="P-loop_NTPase"/>
</dbReference>
<dbReference type="NCBIfam" id="TIGR00017">
    <property type="entry name" value="cmk"/>
    <property type="match status" value="1"/>
</dbReference>
<dbReference type="PANTHER" id="PTHR21299:SF2">
    <property type="entry name" value="CYTIDYLATE KINASE"/>
    <property type="match status" value="1"/>
</dbReference>
<dbReference type="PANTHER" id="PTHR21299">
    <property type="entry name" value="CYTIDYLATE KINASE/PANTOATE-BETA-ALANINE LIGASE"/>
    <property type="match status" value="1"/>
</dbReference>
<dbReference type="Pfam" id="PF02224">
    <property type="entry name" value="Cytidylate_kin"/>
    <property type="match status" value="1"/>
</dbReference>
<dbReference type="SUPFAM" id="SSF52540">
    <property type="entry name" value="P-loop containing nucleoside triphosphate hydrolases"/>
    <property type="match status" value="1"/>
</dbReference>
<name>KCY_STAAN</name>
<accession>P63806</accession>
<accession>Q99U12</accession>
<reference key="1">
    <citation type="journal article" date="2001" name="Lancet">
        <title>Whole genome sequencing of meticillin-resistant Staphylococcus aureus.</title>
        <authorList>
            <person name="Kuroda M."/>
            <person name="Ohta T."/>
            <person name="Uchiyama I."/>
            <person name="Baba T."/>
            <person name="Yuzawa H."/>
            <person name="Kobayashi I."/>
            <person name="Cui L."/>
            <person name="Oguchi A."/>
            <person name="Aoki K."/>
            <person name="Nagai Y."/>
            <person name="Lian J.-Q."/>
            <person name="Ito T."/>
            <person name="Kanamori M."/>
            <person name="Matsumaru H."/>
            <person name="Maruyama A."/>
            <person name="Murakami H."/>
            <person name="Hosoyama A."/>
            <person name="Mizutani-Ui Y."/>
            <person name="Takahashi N.K."/>
            <person name="Sawano T."/>
            <person name="Inoue R."/>
            <person name="Kaito C."/>
            <person name="Sekimizu K."/>
            <person name="Hirakawa H."/>
            <person name="Kuhara S."/>
            <person name="Goto S."/>
            <person name="Yabuzaki J."/>
            <person name="Kanehisa M."/>
            <person name="Yamashita A."/>
            <person name="Oshima K."/>
            <person name="Furuya K."/>
            <person name="Yoshino C."/>
            <person name="Shiba T."/>
            <person name="Hattori M."/>
            <person name="Ogasawara N."/>
            <person name="Hayashi H."/>
            <person name="Hiramatsu K."/>
        </authorList>
    </citation>
    <scope>NUCLEOTIDE SEQUENCE [LARGE SCALE GENOMIC DNA]</scope>
    <source>
        <strain>N315</strain>
    </source>
</reference>
<comment type="catalytic activity">
    <reaction evidence="1">
        <text>CMP + ATP = CDP + ADP</text>
        <dbReference type="Rhea" id="RHEA:11600"/>
        <dbReference type="ChEBI" id="CHEBI:30616"/>
        <dbReference type="ChEBI" id="CHEBI:58069"/>
        <dbReference type="ChEBI" id="CHEBI:60377"/>
        <dbReference type="ChEBI" id="CHEBI:456216"/>
        <dbReference type="EC" id="2.7.4.25"/>
    </reaction>
</comment>
<comment type="catalytic activity">
    <reaction evidence="1">
        <text>dCMP + ATP = dCDP + ADP</text>
        <dbReference type="Rhea" id="RHEA:25094"/>
        <dbReference type="ChEBI" id="CHEBI:30616"/>
        <dbReference type="ChEBI" id="CHEBI:57566"/>
        <dbReference type="ChEBI" id="CHEBI:58593"/>
        <dbReference type="ChEBI" id="CHEBI:456216"/>
        <dbReference type="EC" id="2.7.4.25"/>
    </reaction>
</comment>
<comment type="subcellular location">
    <subcellularLocation>
        <location evidence="1">Cytoplasm</location>
    </subcellularLocation>
</comment>
<comment type="similarity">
    <text evidence="1">Belongs to the cytidylate kinase family. Type 1 subfamily.</text>
</comment>